<organism>
    <name type="scientific">Schizosaccharomyces pombe (strain 972 / ATCC 24843)</name>
    <name type="common">Fission yeast</name>
    <dbReference type="NCBI Taxonomy" id="284812"/>
    <lineage>
        <taxon>Eukaryota</taxon>
        <taxon>Fungi</taxon>
        <taxon>Dikarya</taxon>
        <taxon>Ascomycota</taxon>
        <taxon>Taphrinomycotina</taxon>
        <taxon>Schizosaccharomycetes</taxon>
        <taxon>Schizosaccharomycetales</taxon>
        <taxon>Schizosaccharomycetaceae</taxon>
        <taxon>Schizosaccharomyces</taxon>
    </lineage>
</organism>
<gene>
    <name type="ORF">SPAC3H8.04</name>
</gene>
<feature type="chain" id="PRO_0000116465" description="Uncharacterized protein C3H8.04">
    <location>
        <begin position="1"/>
        <end position="338"/>
    </location>
</feature>
<proteinExistence type="predicted"/>
<protein>
    <recommendedName>
        <fullName>Uncharacterized protein C3H8.04</fullName>
    </recommendedName>
</protein>
<dbReference type="EMBL" id="CU329670">
    <property type="protein sequence ID" value="CAA93161.1"/>
    <property type="molecule type" value="Genomic_DNA"/>
</dbReference>
<dbReference type="PIR" id="T38762">
    <property type="entry name" value="T38762"/>
</dbReference>
<dbReference type="RefSeq" id="NP_592997.1">
    <property type="nucleotide sequence ID" value="NM_001018396.2"/>
</dbReference>
<dbReference type="BioGRID" id="280048">
    <property type="interactions" value="17"/>
</dbReference>
<dbReference type="STRING" id="284812.Q10140"/>
<dbReference type="PaxDb" id="4896-SPAC3H8.04.1"/>
<dbReference type="EnsemblFungi" id="SPAC3H8.04.1">
    <property type="protein sequence ID" value="SPAC3H8.04.1:pep"/>
    <property type="gene ID" value="SPAC3H8.04"/>
</dbReference>
<dbReference type="KEGG" id="spo:2543634"/>
<dbReference type="PomBase" id="SPAC3H8.04"/>
<dbReference type="VEuPathDB" id="FungiDB:SPAC3H8.04"/>
<dbReference type="eggNOG" id="KOG2306">
    <property type="taxonomic scope" value="Eukaryota"/>
</dbReference>
<dbReference type="HOGENOM" id="CLU_869212_0_0_1"/>
<dbReference type="InParanoid" id="Q10140"/>
<dbReference type="PhylomeDB" id="Q10140"/>
<dbReference type="PRO" id="PR:Q10140"/>
<dbReference type="Proteomes" id="UP000002485">
    <property type="component" value="Chromosome I"/>
</dbReference>
<dbReference type="GO" id="GO:0005737">
    <property type="term" value="C:cytoplasm"/>
    <property type="evidence" value="ECO:0007005"/>
    <property type="project" value="PomBase"/>
</dbReference>
<dbReference type="GO" id="GO:0005829">
    <property type="term" value="C:cytosol"/>
    <property type="evidence" value="ECO:0007005"/>
    <property type="project" value="PomBase"/>
</dbReference>
<dbReference type="GO" id="GO:0005634">
    <property type="term" value="C:nucleus"/>
    <property type="evidence" value="ECO:0007005"/>
    <property type="project" value="PomBase"/>
</dbReference>
<dbReference type="InterPro" id="IPR033473">
    <property type="entry name" value="Atos-like_C"/>
</dbReference>
<dbReference type="InterPro" id="IPR025261">
    <property type="entry name" value="Atos-like_cons_dom"/>
</dbReference>
<dbReference type="InterPro" id="IPR051506">
    <property type="entry name" value="ATOS_Transcription_Regulators"/>
</dbReference>
<dbReference type="PANTHER" id="PTHR13199">
    <property type="entry name" value="GH03947P"/>
    <property type="match status" value="1"/>
</dbReference>
<dbReference type="PANTHER" id="PTHR13199:SF11">
    <property type="entry name" value="PROTEIN ATOSSA"/>
    <property type="match status" value="1"/>
</dbReference>
<dbReference type="Pfam" id="PF13889">
    <property type="entry name" value="Chromosome_seg"/>
    <property type="match status" value="1"/>
</dbReference>
<dbReference type="Pfam" id="PF13915">
    <property type="entry name" value="DUF4210"/>
    <property type="match status" value="1"/>
</dbReference>
<dbReference type="SMART" id="SM01177">
    <property type="entry name" value="DUF4210"/>
    <property type="match status" value="1"/>
</dbReference>
<name>YAS4_SCHPO</name>
<accession>Q10140</accession>
<reference key="1">
    <citation type="journal article" date="2002" name="Nature">
        <title>The genome sequence of Schizosaccharomyces pombe.</title>
        <authorList>
            <person name="Wood V."/>
            <person name="Gwilliam R."/>
            <person name="Rajandream M.A."/>
            <person name="Lyne M.H."/>
            <person name="Lyne R."/>
            <person name="Stewart A."/>
            <person name="Sgouros J.G."/>
            <person name="Peat N."/>
            <person name="Hayles J."/>
            <person name="Baker S.G."/>
            <person name="Basham D."/>
            <person name="Bowman S."/>
            <person name="Brooks K."/>
            <person name="Brown D."/>
            <person name="Brown S."/>
            <person name="Chillingworth T."/>
            <person name="Churcher C.M."/>
            <person name="Collins M."/>
            <person name="Connor R."/>
            <person name="Cronin A."/>
            <person name="Davis P."/>
            <person name="Feltwell T."/>
            <person name="Fraser A."/>
            <person name="Gentles S."/>
            <person name="Goble A."/>
            <person name="Hamlin N."/>
            <person name="Harris D.E."/>
            <person name="Hidalgo J."/>
            <person name="Hodgson G."/>
            <person name="Holroyd S."/>
            <person name="Hornsby T."/>
            <person name="Howarth S."/>
            <person name="Huckle E.J."/>
            <person name="Hunt S."/>
            <person name="Jagels K."/>
            <person name="James K.D."/>
            <person name="Jones L."/>
            <person name="Jones M."/>
            <person name="Leather S."/>
            <person name="McDonald S."/>
            <person name="McLean J."/>
            <person name="Mooney P."/>
            <person name="Moule S."/>
            <person name="Mungall K.L."/>
            <person name="Murphy L.D."/>
            <person name="Niblett D."/>
            <person name="Odell C."/>
            <person name="Oliver K."/>
            <person name="O'Neil S."/>
            <person name="Pearson D."/>
            <person name="Quail M.A."/>
            <person name="Rabbinowitsch E."/>
            <person name="Rutherford K.M."/>
            <person name="Rutter S."/>
            <person name="Saunders D."/>
            <person name="Seeger K."/>
            <person name="Sharp S."/>
            <person name="Skelton J."/>
            <person name="Simmonds M.N."/>
            <person name="Squares R."/>
            <person name="Squares S."/>
            <person name="Stevens K."/>
            <person name="Taylor K."/>
            <person name="Taylor R.G."/>
            <person name="Tivey A."/>
            <person name="Walsh S.V."/>
            <person name="Warren T."/>
            <person name="Whitehead S."/>
            <person name="Woodward J.R."/>
            <person name="Volckaert G."/>
            <person name="Aert R."/>
            <person name="Robben J."/>
            <person name="Grymonprez B."/>
            <person name="Weltjens I."/>
            <person name="Vanstreels E."/>
            <person name="Rieger M."/>
            <person name="Schaefer M."/>
            <person name="Mueller-Auer S."/>
            <person name="Gabel C."/>
            <person name="Fuchs M."/>
            <person name="Duesterhoeft A."/>
            <person name="Fritzc C."/>
            <person name="Holzer E."/>
            <person name="Moestl D."/>
            <person name="Hilbert H."/>
            <person name="Borzym K."/>
            <person name="Langer I."/>
            <person name="Beck A."/>
            <person name="Lehrach H."/>
            <person name="Reinhardt R."/>
            <person name="Pohl T.M."/>
            <person name="Eger P."/>
            <person name="Zimmermann W."/>
            <person name="Wedler H."/>
            <person name="Wambutt R."/>
            <person name="Purnelle B."/>
            <person name="Goffeau A."/>
            <person name="Cadieu E."/>
            <person name="Dreano S."/>
            <person name="Gloux S."/>
            <person name="Lelaure V."/>
            <person name="Mottier S."/>
            <person name="Galibert F."/>
            <person name="Aves S.J."/>
            <person name="Xiang Z."/>
            <person name="Hunt C."/>
            <person name="Moore K."/>
            <person name="Hurst S.M."/>
            <person name="Lucas M."/>
            <person name="Rochet M."/>
            <person name="Gaillardin C."/>
            <person name="Tallada V.A."/>
            <person name="Garzon A."/>
            <person name="Thode G."/>
            <person name="Daga R.R."/>
            <person name="Cruzado L."/>
            <person name="Jimenez J."/>
            <person name="Sanchez M."/>
            <person name="del Rey F."/>
            <person name="Benito J."/>
            <person name="Dominguez A."/>
            <person name="Revuelta J.L."/>
            <person name="Moreno S."/>
            <person name="Armstrong J."/>
            <person name="Forsburg S.L."/>
            <person name="Cerutti L."/>
            <person name="Lowe T."/>
            <person name="McCombie W.R."/>
            <person name="Paulsen I."/>
            <person name="Potashkin J."/>
            <person name="Shpakovski G.V."/>
            <person name="Ussery D."/>
            <person name="Barrell B.G."/>
            <person name="Nurse P."/>
        </authorList>
    </citation>
    <scope>NUCLEOTIDE SEQUENCE [LARGE SCALE GENOMIC DNA]</scope>
    <source>
        <strain>972 / ATCC 24843</strain>
    </source>
</reference>
<keyword id="KW-1185">Reference proteome</keyword>
<sequence length="338" mass="38474">MPACYCATSTSLENNELLYKNIRNLFSTSRSFPIEQEWMNLKSISQMKDFFSNFPGNSKANNHFLCNSPLKFEIFNNEKSVKPSNGPHLFTRCSCRCNKLLSGDYITQQQPIDASAEHSLNAKGINTYSLKNCFQRSGFIGSYEESLFSGHMPYCSSVPFEFSIEIGVISFCRCKPSLVFPPHLKINFVAYSLVGNVDNVQFPYIGRFRLRSQKSDKVMNKGYPFGYRIPSVGQLQLILRQTNGLVIKVFLVPYNVSSMVDCSKTWIRQKHYLQQLDDKSGKILSHLKFGLQLQIICTSAGHHYLYDSQRIIFVQQSLGGLYGNTKIVNETLLSESCR</sequence>